<comment type="similarity">
    <text evidence="1">Belongs to the bacterial ribosomal protein bL34 family.</text>
</comment>
<keyword id="KW-1185">Reference proteome</keyword>
<keyword id="KW-0687">Ribonucleoprotein</keyword>
<keyword id="KW-0689">Ribosomal protein</keyword>
<feature type="chain" id="PRO_1000205832" description="Large ribosomal subunit protein bL34">
    <location>
        <begin position="1"/>
        <end position="44"/>
    </location>
</feature>
<gene>
    <name evidence="1" type="primary">rpmH</name>
    <name type="ordered locus">Kole_0258</name>
</gene>
<accession>C5CD39</accession>
<reference key="1">
    <citation type="submission" date="2009-06" db="EMBL/GenBank/DDBJ databases">
        <title>Complete sequence of Thermotogales bacterium TBF 19.5.1.</title>
        <authorList>
            <consortium name="US DOE Joint Genome Institute"/>
            <person name="Lucas S."/>
            <person name="Copeland A."/>
            <person name="Lapidus A."/>
            <person name="Glavina del Rio T."/>
            <person name="Tice H."/>
            <person name="Bruce D."/>
            <person name="Goodwin L."/>
            <person name="Pitluck S."/>
            <person name="Chertkov O."/>
            <person name="Brettin T."/>
            <person name="Detter J.C."/>
            <person name="Han C."/>
            <person name="Schmutz J."/>
            <person name="Larimer F."/>
            <person name="Land M."/>
            <person name="Hauser L."/>
            <person name="Kyrpides N."/>
            <person name="Ovchinnikova G."/>
            <person name="Noll K."/>
        </authorList>
    </citation>
    <scope>NUCLEOTIDE SEQUENCE [LARGE SCALE GENOMIC DNA]</scope>
    <source>
        <strain>ATCC BAA-1733 / DSM 21960 / TBF 19.5.1</strain>
    </source>
</reference>
<sequence>MKRTYQPSRVKRKRTHGFLVRMRTKSGRRIIANRRRKGRKRLAV</sequence>
<organism>
    <name type="scientific">Kosmotoga olearia (strain ATCC BAA-1733 / DSM 21960 / TBF 19.5.1)</name>
    <dbReference type="NCBI Taxonomy" id="521045"/>
    <lineage>
        <taxon>Bacteria</taxon>
        <taxon>Thermotogati</taxon>
        <taxon>Thermotogota</taxon>
        <taxon>Thermotogae</taxon>
        <taxon>Kosmotogales</taxon>
        <taxon>Kosmotogaceae</taxon>
        <taxon>Kosmotoga</taxon>
    </lineage>
</organism>
<evidence type="ECO:0000255" key="1">
    <source>
        <dbReference type="HAMAP-Rule" id="MF_00391"/>
    </source>
</evidence>
<evidence type="ECO:0000305" key="2"/>
<name>RL34_KOSOT</name>
<protein>
    <recommendedName>
        <fullName evidence="1">Large ribosomal subunit protein bL34</fullName>
    </recommendedName>
    <alternativeName>
        <fullName evidence="2">50S ribosomal protein L34</fullName>
    </alternativeName>
</protein>
<proteinExistence type="inferred from homology"/>
<dbReference type="EMBL" id="CP001634">
    <property type="protein sequence ID" value="ACR78983.1"/>
    <property type="molecule type" value="Genomic_DNA"/>
</dbReference>
<dbReference type="RefSeq" id="WP_012744770.1">
    <property type="nucleotide sequence ID" value="NC_012785.1"/>
</dbReference>
<dbReference type="SMR" id="C5CD39"/>
<dbReference type="STRING" id="521045.Kole_0258"/>
<dbReference type="KEGG" id="kol:Kole_0258"/>
<dbReference type="eggNOG" id="COG0230">
    <property type="taxonomic scope" value="Bacteria"/>
</dbReference>
<dbReference type="HOGENOM" id="CLU_129938_2_0_0"/>
<dbReference type="Proteomes" id="UP000002382">
    <property type="component" value="Chromosome"/>
</dbReference>
<dbReference type="GO" id="GO:1990904">
    <property type="term" value="C:ribonucleoprotein complex"/>
    <property type="evidence" value="ECO:0007669"/>
    <property type="project" value="UniProtKB-KW"/>
</dbReference>
<dbReference type="GO" id="GO:0005840">
    <property type="term" value="C:ribosome"/>
    <property type="evidence" value="ECO:0007669"/>
    <property type="project" value="UniProtKB-KW"/>
</dbReference>
<dbReference type="GO" id="GO:0003735">
    <property type="term" value="F:structural constituent of ribosome"/>
    <property type="evidence" value="ECO:0007669"/>
    <property type="project" value="InterPro"/>
</dbReference>
<dbReference type="GO" id="GO:0006412">
    <property type="term" value="P:translation"/>
    <property type="evidence" value="ECO:0007669"/>
    <property type="project" value="UniProtKB-UniRule"/>
</dbReference>
<dbReference type="FunFam" id="1.10.287.3980:FF:000001">
    <property type="entry name" value="Mitochondrial ribosomal protein L34"/>
    <property type="match status" value="1"/>
</dbReference>
<dbReference type="Gene3D" id="1.10.287.3980">
    <property type="match status" value="1"/>
</dbReference>
<dbReference type="HAMAP" id="MF_00391">
    <property type="entry name" value="Ribosomal_bL34"/>
    <property type="match status" value="1"/>
</dbReference>
<dbReference type="InterPro" id="IPR000271">
    <property type="entry name" value="Ribosomal_bL34"/>
</dbReference>
<dbReference type="InterPro" id="IPR020939">
    <property type="entry name" value="Ribosomal_bL34_CS"/>
</dbReference>
<dbReference type="NCBIfam" id="TIGR01030">
    <property type="entry name" value="rpmH_bact"/>
    <property type="match status" value="1"/>
</dbReference>
<dbReference type="PANTHER" id="PTHR14503:SF4">
    <property type="entry name" value="LARGE RIBOSOMAL SUBUNIT PROTEIN BL34M"/>
    <property type="match status" value="1"/>
</dbReference>
<dbReference type="PANTHER" id="PTHR14503">
    <property type="entry name" value="MITOCHONDRIAL RIBOSOMAL PROTEIN 34 FAMILY MEMBER"/>
    <property type="match status" value="1"/>
</dbReference>
<dbReference type="Pfam" id="PF00468">
    <property type="entry name" value="Ribosomal_L34"/>
    <property type="match status" value="1"/>
</dbReference>
<dbReference type="PROSITE" id="PS00784">
    <property type="entry name" value="RIBOSOMAL_L34"/>
    <property type="match status" value="1"/>
</dbReference>